<protein>
    <recommendedName>
        <fullName evidence="1">3-hydroxyacyl-[acyl-carrier-protein] dehydratase FabZ</fullName>
        <ecNumber evidence="1">4.2.1.59</ecNumber>
    </recommendedName>
    <alternativeName>
        <fullName evidence="1">(3R)-hydroxymyristoyl-[acyl-carrier-protein] dehydratase</fullName>
        <shortName evidence="1">(3R)-hydroxymyristoyl-ACP dehydrase</shortName>
    </alternativeName>
    <alternativeName>
        <fullName evidence="1">Beta-hydroxyacyl-ACP dehydratase</fullName>
    </alternativeName>
</protein>
<sequence length="146" mass="16774">MMDINEIREYLPHRYPFLLVDRVVELDIEGKRIRAYKNVSINEPFFNGHFPEHPIMPGVLIIEAMAQAAGILGFKMLDVKPADGTLYYFVGSDKLRFRQPVLPGDQLQLHAKFISVKRSIWKFDCHATVDDKPVCSAEIICAERKL</sequence>
<keyword id="KW-0963">Cytoplasm</keyword>
<keyword id="KW-0441">Lipid A biosynthesis</keyword>
<keyword id="KW-0444">Lipid biosynthesis</keyword>
<keyword id="KW-0443">Lipid metabolism</keyword>
<keyword id="KW-0456">Lyase</keyword>
<dbReference type="EC" id="4.2.1.59" evidence="1"/>
<dbReference type="EMBL" id="CP000438">
    <property type="protein sequence ID" value="ABJ12878.1"/>
    <property type="molecule type" value="Genomic_DNA"/>
</dbReference>
<dbReference type="RefSeq" id="WP_003092375.1">
    <property type="nucleotide sequence ID" value="NZ_CP034244.1"/>
</dbReference>
<dbReference type="SMR" id="Q02RB7"/>
<dbReference type="GeneID" id="77219874"/>
<dbReference type="KEGG" id="pau:PA14_17190"/>
<dbReference type="PseudoCAP" id="PA14_17190"/>
<dbReference type="HOGENOM" id="CLU_078912_1_0_6"/>
<dbReference type="BioCyc" id="PAER208963:G1G74-1416-MONOMER"/>
<dbReference type="Proteomes" id="UP000000653">
    <property type="component" value="Chromosome"/>
</dbReference>
<dbReference type="GO" id="GO:0005737">
    <property type="term" value="C:cytoplasm"/>
    <property type="evidence" value="ECO:0007669"/>
    <property type="project" value="UniProtKB-SubCell"/>
</dbReference>
<dbReference type="GO" id="GO:0016020">
    <property type="term" value="C:membrane"/>
    <property type="evidence" value="ECO:0007669"/>
    <property type="project" value="GOC"/>
</dbReference>
<dbReference type="GO" id="GO:0019171">
    <property type="term" value="F:(3R)-hydroxyacyl-[acyl-carrier-protein] dehydratase activity"/>
    <property type="evidence" value="ECO:0007669"/>
    <property type="project" value="UniProtKB-EC"/>
</dbReference>
<dbReference type="GO" id="GO:0006633">
    <property type="term" value="P:fatty acid biosynthetic process"/>
    <property type="evidence" value="ECO:0007669"/>
    <property type="project" value="UniProtKB-UniRule"/>
</dbReference>
<dbReference type="GO" id="GO:0009245">
    <property type="term" value="P:lipid A biosynthetic process"/>
    <property type="evidence" value="ECO:0007669"/>
    <property type="project" value="UniProtKB-UniRule"/>
</dbReference>
<dbReference type="CDD" id="cd01288">
    <property type="entry name" value="FabZ"/>
    <property type="match status" value="1"/>
</dbReference>
<dbReference type="FunFam" id="3.10.129.10:FF:000001">
    <property type="entry name" value="3-hydroxyacyl-[acyl-carrier-protein] dehydratase FabZ"/>
    <property type="match status" value="1"/>
</dbReference>
<dbReference type="Gene3D" id="3.10.129.10">
    <property type="entry name" value="Hotdog Thioesterase"/>
    <property type="match status" value="1"/>
</dbReference>
<dbReference type="HAMAP" id="MF_00406">
    <property type="entry name" value="FabZ"/>
    <property type="match status" value="1"/>
</dbReference>
<dbReference type="InterPro" id="IPR013114">
    <property type="entry name" value="FabA_FabZ"/>
</dbReference>
<dbReference type="InterPro" id="IPR010084">
    <property type="entry name" value="FabZ"/>
</dbReference>
<dbReference type="InterPro" id="IPR029069">
    <property type="entry name" value="HotDog_dom_sf"/>
</dbReference>
<dbReference type="NCBIfam" id="TIGR01750">
    <property type="entry name" value="fabZ"/>
    <property type="match status" value="1"/>
</dbReference>
<dbReference type="NCBIfam" id="NF000582">
    <property type="entry name" value="PRK00006.1"/>
    <property type="match status" value="1"/>
</dbReference>
<dbReference type="PANTHER" id="PTHR30272">
    <property type="entry name" value="3-HYDROXYACYL-[ACYL-CARRIER-PROTEIN] DEHYDRATASE"/>
    <property type="match status" value="1"/>
</dbReference>
<dbReference type="PANTHER" id="PTHR30272:SF1">
    <property type="entry name" value="3-HYDROXYACYL-[ACYL-CARRIER-PROTEIN] DEHYDRATASE"/>
    <property type="match status" value="1"/>
</dbReference>
<dbReference type="Pfam" id="PF07977">
    <property type="entry name" value="FabA"/>
    <property type="match status" value="1"/>
</dbReference>
<dbReference type="SUPFAM" id="SSF54637">
    <property type="entry name" value="Thioesterase/thiol ester dehydrase-isomerase"/>
    <property type="match status" value="1"/>
</dbReference>
<name>FABZ_PSEAB</name>
<comment type="function">
    <text evidence="1">Involved in unsaturated fatty acids biosynthesis. Catalyzes the dehydration of short chain beta-hydroxyacyl-ACPs and long chain saturated and unsaturated beta-hydroxyacyl-ACPs.</text>
</comment>
<comment type="catalytic activity">
    <reaction evidence="1">
        <text>a (3R)-hydroxyacyl-[ACP] = a (2E)-enoyl-[ACP] + H2O</text>
        <dbReference type="Rhea" id="RHEA:13097"/>
        <dbReference type="Rhea" id="RHEA-COMP:9925"/>
        <dbReference type="Rhea" id="RHEA-COMP:9945"/>
        <dbReference type="ChEBI" id="CHEBI:15377"/>
        <dbReference type="ChEBI" id="CHEBI:78784"/>
        <dbReference type="ChEBI" id="CHEBI:78827"/>
        <dbReference type="EC" id="4.2.1.59"/>
    </reaction>
</comment>
<comment type="subcellular location">
    <subcellularLocation>
        <location evidence="1">Cytoplasm</location>
    </subcellularLocation>
</comment>
<comment type="similarity">
    <text evidence="1">Belongs to the thioester dehydratase family. FabZ subfamily.</text>
</comment>
<feature type="chain" id="PRO_0000301912" description="3-hydroxyacyl-[acyl-carrier-protein] dehydratase FabZ">
    <location>
        <begin position="1"/>
        <end position="146"/>
    </location>
</feature>
<feature type="active site" evidence="1">
    <location>
        <position position="49"/>
    </location>
</feature>
<evidence type="ECO:0000255" key="1">
    <source>
        <dbReference type="HAMAP-Rule" id="MF_00406"/>
    </source>
</evidence>
<proteinExistence type="inferred from homology"/>
<organism>
    <name type="scientific">Pseudomonas aeruginosa (strain UCBPP-PA14)</name>
    <dbReference type="NCBI Taxonomy" id="208963"/>
    <lineage>
        <taxon>Bacteria</taxon>
        <taxon>Pseudomonadati</taxon>
        <taxon>Pseudomonadota</taxon>
        <taxon>Gammaproteobacteria</taxon>
        <taxon>Pseudomonadales</taxon>
        <taxon>Pseudomonadaceae</taxon>
        <taxon>Pseudomonas</taxon>
    </lineage>
</organism>
<accession>Q02RB7</accession>
<reference key="1">
    <citation type="journal article" date="2006" name="Genome Biol.">
        <title>Genomic analysis reveals that Pseudomonas aeruginosa virulence is combinatorial.</title>
        <authorList>
            <person name="Lee D.G."/>
            <person name="Urbach J.M."/>
            <person name="Wu G."/>
            <person name="Liberati N.T."/>
            <person name="Feinbaum R.L."/>
            <person name="Miyata S."/>
            <person name="Diggins L.T."/>
            <person name="He J."/>
            <person name="Saucier M."/>
            <person name="Deziel E."/>
            <person name="Friedman L."/>
            <person name="Li L."/>
            <person name="Grills G."/>
            <person name="Montgomery K."/>
            <person name="Kucherlapati R."/>
            <person name="Rahme L.G."/>
            <person name="Ausubel F.M."/>
        </authorList>
    </citation>
    <scope>NUCLEOTIDE SEQUENCE [LARGE SCALE GENOMIC DNA]</scope>
    <source>
        <strain>UCBPP-PA14</strain>
    </source>
</reference>
<gene>
    <name evidence="1" type="primary">fabZ</name>
    <name type="ordered locus">PA14_17190</name>
</gene>